<dbReference type="EC" id="1.2.1.3"/>
<dbReference type="EMBL" id="AAFC03050684">
    <property type="status" value="NOT_ANNOTATED_CDS"/>
    <property type="molecule type" value="Genomic_DNA"/>
</dbReference>
<dbReference type="EMBL" id="S61045">
    <property type="protein sequence ID" value="AAB26659.1"/>
    <property type="molecule type" value="mRNA"/>
</dbReference>
<dbReference type="PIR" id="I46935">
    <property type="entry name" value="I46935"/>
</dbReference>
<dbReference type="SMR" id="P52476"/>
<dbReference type="FunCoup" id="P52476">
    <property type="interactions" value="602"/>
</dbReference>
<dbReference type="STRING" id="9913.ENSBTAP00000027172"/>
<dbReference type="PaxDb" id="9913-ENSBTAP00000027172"/>
<dbReference type="eggNOG" id="KOG2450">
    <property type="taxonomic scope" value="Eukaryota"/>
</dbReference>
<dbReference type="HOGENOM" id="CLU_005391_0_0_1"/>
<dbReference type="InParanoid" id="P52476"/>
<dbReference type="UniPathway" id="UPA00780">
    <property type="reaction ID" value="UER00768"/>
</dbReference>
<dbReference type="Proteomes" id="UP000009136">
    <property type="component" value="Unplaced"/>
</dbReference>
<dbReference type="GO" id="GO:0005759">
    <property type="term" value="C:mitochondrial matrix"/>
    <property type="evidence" value="ECO:0007669"/>
    <property type="project" value="UniProtKB-SubCell"/>
</dbReference>
<dbReference type="GO" id="GO:0004029">
    <property type="term" value="F:aldehyde dehydrogenase (NAD+) activity"/>
    <property type="evidence" value="ECO:0000318"/>
    <property type="project" value="GO_Central"/>
</dbReference>
<dbReference type="GO" id="GO:0006068">
    <property type="term" value="P:ethanol catabolic process"/>
    <property type="evidence" value="ECO:0007669"/>
    <property type="project" value="UniProtKB-UniPathway"/>
</dbReference>
<dbReference type="CDD" id="cd07141">
    <property type="entry name" value="ALDH_F1AB_F2_RALDH1"/>
    <property type="match status" value="1"/>
</dbReference>
<dbReference type="FunFam" id="3.40.605.10:FF:000029">
    <property type="entry name" value="Aldehyde dehydrogenase, mitochondrial"/>
    <property type="match status" value="1"/>
</dbReference>
<dbReference type="FunFam" id="3.40.309.10:FF:000001">
    <property type="entry name" value="Mitochondrial aldehyde dehydrogenase 2"/>
    <property type="match status" value="1"/>
</dbReference>
<dbReference type="Gene3D" id="3.40.605.10">
    <property type="entry name" value="Aldehyde Dehydrogenase, Chain A, domain 1"/>
    <property type="match status" value="1"/>
</dbReference>
<dbReference type="Gene3D" id="3.40.309.10">
    <property type="entry name" value="Aldehyde Dehydrogenase, Chain A, domain 2"/>
    <property type="match status" value="1"/>
</dbReference>
<dbReference type="InterPro" id="IPR016161">
    <property type="entry name" value="Ald_DH/histidinol_DH"/>
</dbReference>
<dbReference type="InterPro" id="IPR016163">
    <property type="entry name" value="Ald_DH_C"/>
</dbReference>
<dbReference type="InterPro" id="IPR016162">
    <property type="entry name" value="Ald_DH_N"/>
</dbReference>
<dbReference type="InterPro" id="IPR015590">
    <property type="entry name" value="Aldehyde_DH_dom"/>
</dbReference>
<dbReference type="PANTHER" id="PTHR11699">
    <property type="entry name" value="ALDEHYDE DEHYDROGENASE-RELATED"/>
    <property type="match status" value="1"/>
</dbReference>
<dbReference type="Pfam" id="PF00171">
    <property type="entry name" value="Aldedh"/>
    <property type="match status" value="1"/>
</dbReference>
<dbReference type="SUPFAM" id="SSF53720">
    <property type="entry name" value="ALDH-like"/>
    <property type="match status" value="1"/>
</dbReference>
<evidence type="ECO:0000250" key="1"/>
<evidence type="ECO:0000250" key="2">
    <source>
        <dbReference type="UniProtKB" id="Q9CZS1"/>
    </source>
</evidence>
<evidence type="ECO:0000255" key="3"/>
<evidence type="ECO:0000305" key="4"/>
<reference key="1">
    <citation type="journal article" date="2009" name="Science">
        <title>The genome sequence of taurine cattle: a window to ruminant biology and evolution.</title>
        <authorList>
            <consortium name="The bovine genome sequencing and analysis consortium"/>
        </authorList>
    </citation>
    <scope>NUCLEOTIDE SEQUENCE [LARGE SCALE GENOMIC DNA]</scope>
    <source>
        <strain>Hereford</strain>
    </source>
</reference>
<reference key="2">
    <citation type="journal article" date="1993" name="Adv. Exp. Med. Biol.">
        <title>Bovine corneal aldehyde dehydrogenases: evidence for multiple gene products (ALDH3 and ALDHX).</title>
        <authorList>
            <person name="Algar E.M."/>
            <person name="Cheung B."/>
            <person name="Hayes J."/>
            <person name="Holmes R.S."/>
            <person name="Beacham I.R."/>
        </authorList>
    </citation>
    <scope>NUCLEOTIDE SEQUENCE [MRNA] OF 284-409</scope>
    <source>
        <tissue>Cornea</tissue>
    </source>
</reference>
<name>AL1B1_BOVIN</name>
<organism>
    <name type="scientific">Bos taurus</name>
    <name type="common">Bovine</name>
    <dbReference type="NCBI Taxonomy" id="9913"/>
    <lineage>
        <taxon>Eukaryota</taxon>
        <taxon>Metazoa</taxon>
        <taxon>Chordata</taxon>
        <taxon>Craniata</taxon>
        <taxon>Vertebrata</taxon>
        <taxon>Euteleostomi</taxon>
        <taxon>Mammalia</taxon>
        <taxon>Eutheria</taxon>
        <taxon>Laurasiatheria</taxon>
        <taxon>Artiodactyla</taxon>
        <taxon>Ruminantia</taxon>
        <taxon>Pecora</taxon>
        <taxon>Bovidae</taxon>
        <taxon>Bovinae</taxon>
        <taxon>Bos</taxon>
    </lineage>
</organism>
<keyword id="KW-0007">Acetylation</keyword>
<keyword id="KW-0496">Mitochondrion</keyword>
<keyword id="KW-0520">NAD</keyword>
<keyword id="KW-0560">Oxidoreductase</keyword>
<keyword id="KW-1185">Reference proteome</keyword>
<keyword id="KW-0809">Transit peptide</keyword>
<sequence length="511" mass="56770">PRLFALHHSATQYFSAAALPSPIPNPDIPDNQLFISNKWHDAVSKKTFPTVSPATGEVIGHVAEGDWADVDLAAKAARAAFRLGSPWRWMDALKRGWLLNHLADLVERDCVYLASLESLDNGKPFQESYVLDLDEVIKVYRYFAGWADKWHGKTIPMDGEHFCFTRHEPVGVCCQIIPWNFPLVMQSWKLALALAMGNTVVTKVAEQTPFSALYLASLIKEVGLPPGLVNIVTGYGPTAGAAIAHHMDIGKVAFTGSTKVGHLIQKAAGNSSLKRVTLELGGKSLSIVLADADMDHAVEQRQEALFFNMGQCCCPGSWTFIEESIYDEFLERTVEKAKQRRVGNPFDLDTQQGPQVDRERFERILGYIQLGQKEGAKLLCGGEHFRQQCFFIKPTVFGGVQDDMRIAREEIFGPVQPLFKFKKIEEVIERADNTRYGLAAAVFTQDLDKAMYFTQALQTGTVWVNTYNVVTCHTPLGGFKEPGNGRELGEDGLKAYTEVKTVTIKVPQKNS</sequence>
<gene>
    <name type="primary">ALDH1B1</name>
    <name type="synonym">ALDH1B2</name>
    <name type="synonym">ALDH5</name>
    <name type="synonym">ALDHX</name>
</gene>
<feature type="transit peptide" description="Mitochondrion" evidence="3">
    <location>
        <begin position="1" status="less than"/>
        <end position="11"/>
    </location>
</feature>
<feature type="chain" id="PRO_0000056477" description="Aldehyde dehydrogenase X, mitochondrial">
    <location>
        <begin position="12"/>
        <end position="511"/>
    </location>
</feature>
<feature type="active site" description="Proton acceptor" evidence="1">
    <location>
        <position position="279"/>
    </location>
</feature>
<feature type="active site" description="Nucleophile" evidence="1">
    <location>
        <position position="313"/>
    </location>
</feature>
<feature type="binding site" evidence="1">
    <location>
        <begin position="256"/>
        <end position="261"/>
    </location>
    <ligand>
        <name>NAD(+)</name>
        <dbReference type="ChEBI" id="CHEBI:57540"/>
    </ligand>
</feature>
<feature type="site" description="Transition state stabilizer" evidence="1">
    <location>
        <position position="180"/>
    </location>
</feature>
<feature type="modified residue" description="N6-acetyllysine" evidence="2">
    <location>
        <position position="45"/>
    </location>
</feature>
<feature type="modified residue" description="N6-acetyllysine; alternate" evidence="2">
    <location>
        <position position="46"/>
    </location>
</feature>
<feature type="modified residue" description="N6-succinyllysine; alternate" evidence="2">
    <location>
        <position position="46"/>
    </location>
</feature>
<feature type="modified residue" description="N6-succinyllysine" evidence="2">
    <location>
        <position position="75"/>
    </location>
</feature>
<feature type="modified residue" description="N6-acetyllysine; alternate" evidence="2">
    <location>
        <position position="377"/>
    </location>
</feature>
<feature type="modified residue" description="N6-succinyllysine; alternate" evidence="2">
    <location>
        <position position="377"/>
    </location>
</feature>
<feature type="modified residue" description="N6-acetyllysine; alternate" evidence="2">
    <location>
        <position position="393"/>
    </location>
</feature>
<feature type="modified residue" description="N6-succinyllysine; alternate" evidence="2">
    <location>
        <position position="393"/>
    </location>
</feature>
<feature type="modified residue" description="N6-acetyllysine; alternate" evidence="2">
    <location>
        <position position="420"/>
    </location>
</feature>
<feature type="modified residue" description="N6-succinyllysine; alternate" evidence="2">
    <location>
        <position position="420"/>
    </location>
</feature>
<feature type="modified residue" description="N6-acetyllysine" evidence="2">
    <location>
        <position position="423"/>
    </location>
</feature>
<feature type="sequence conflict" description="In Ref. 2; AAB26659." evidence="4" ref="2">
    <original>N</original>
    <variation>S</variation>
    <location>
        <position position="308"/>
    </location>
</feature>
<feature type="non-terminal residue">
    <location>
        <position position="1"/>
    </location>
</feature>
<proteinExistence type="evidence at transcript level"/>
<protein>
    <recommendedName>
        <fullName>Aldehyde dehydrogenase X, mitochondrial</fullName>
        <ecNumber>1.2.1.3</ecNumber>
    </recommendedName>
    <alternativeName>
        <fullName>ALDH class 2</fullName>
    </alternativeName>
    <alternativeName>
        <fullName>ALDHX</fullName>
    </alternativeName>
    <alternativeName>
        <fullName>Aldehyde dehydrogenase family 1 member B1</fullName>
    </alternativeName>
</protein>
<accession>P52476</accession>
<comment type="function">
    <text>ALDHs play a major role in the detoxification of alcohol-derived acetaldehyde. They are involved in the metabolism of corticosteroids, biogenic amines, neurotransmitters, and lipid peroxidation. In the cornea, this enzyme may help in the absorption of the damaging UV-B, as well as in the detoxification of the UV-induced peroxidic aldehydes.</text>
</comment>
<comment type="catalytic activity">
    <reaction>
        <text>an aldehyde + NAD(+) + H2O = a carboxylate + NADH + 2 H(+)</text>
        <dbReference type="Rhea" id="RHEA:16185"/>
        <dbReference type="ChEBI" id="CHEBI:15377"/>
        <dbReference type="ChEBI" id="CHEBI:15378"/>
        <dbReference type="ChEBI" id="CHEBI:17478"/>
        <dbReference type="ChEBI" id="CHEBI:29067"/>
        <dbReference type="ChEBI" id="CHEBI:57540"/>
        <dbReference type="ChEBI" id="CHEBI:57945"/>
        <dbReference type="EC" id="1.2.1.3"/>
    </reaction>
</comment>
<comment type="pathway">
    <text>Alcohol metabolism; ethanol degradation; acetate from ethanol: step 2/2.</text>
</comment>
<comment type="subunit">
    <text evidence="1">Homotetramer.</text>
</comment>
<comment type="subcellular location">
    <subcellularLocation>
        <location evidence="1">Mitochondrion matrix</location>
    </subcellularLocation>
</comment>
<comment type="similarity">
    <text evidence="4">Belongs to the aldehyde dehydrogenase family.</text>
</comment>